<feature type="chain" id="PRO_0000295262" description="KxDL motif-containing protein 1">
    <location>
        <begin position="1"/>
        <end position="182"/>
    </location>
</feature>
<feature type="region of interest" description="Disordered" evidence="3">
    <location>
        <begin position="124"/>
        <end position="182"/>
    </location>
</feature>
<feature type="compositionally biased region" description="Low complexity" evidence="3">
    <location>
        <begin position="124"/>
        <end position="135"/>
    </location>
</feature>
<feature type="compositionally biased region" description="Basic and acidic residues" evidence="3">
    <location>
        <begin position="155"/>
        <end position="176"/>
    </location>
</feature>
<organism>
    <name type="scientific">Danio rerio</name>
    <name type="common">Zebrafish</name>
    <name type="synonym">Brachydanio rerio</name>
    <dbReference type="NCBI Taxonomy" id="7955"/>
    <lineage>
        <taxon>Eukaryota</taxon>
        <taxon>Metazoa</taxon>
        <taxon>Chordata</taxon>
        <taxon>Craniata</taxon>
        <taxon>Vertebrata</taxon>
        <taxon>Euteleostomi</taxon>
        <taxon>Actinopterygii</taxon>
        <taxon>Neopterygii</taxon>
        <taxon>Teleostei</taxon>
        <taxon>Ostariophysi</taxon>
        <taxon>Cypriniformes</taxon>
        <taxon>Danionidae</taxon>
        <taxon>Danioninae</taxon>
        <taxon>Danio</taxon>
    </lineage>
</organism>
<keyword id="KW-0458">Lysosome</keyword>
<keyword id="KW-0472">Membrane</keyword>
<keyword id="KW-1185">Reference proteome</keyword>
<gene>
    <name type="primary">kxd1</name>
    <name type="ORF">zgc:91862</name>
</gene>
<accession>Q6DBR9</accession>
<dbReference type="EMBL" id="BC078391">
    <property type="protein sequence ID" value="AAH78391.1"/>
    <property type="molecule type" value="mRNA"/>
</dbReference>
<dbReference type="RefSeq" id="NP_001003469.1">
    <property type="nucleotide sequence ID" value="NM_001003469.2"/>
</dbReference>
<dbReference type="SMR" id="Q6DBR9"/>
<dbReference type="FunCoup" id="Q6DBR9">
    <property type="interactions" value="750"/>
</dbReference>
<dbReference type="STRING" id="7955.ENSDARP00000068138"/>
<dbReference type="PaxDb" id="7955-ENSDARP00000068138"/>
<dbReference type="Ensembl" id="ENSDART00000073648">
    <property type="protein sequence ID" value="ENSDARP00000068138"/>
    <property type="gene ID" value="ENSDARG00000051934"/>
</dbReference>
<dbReference type="GeneID" id="445075"/>
<dbReference type="KEGG" id="dre:445075"/>
<dbReference type="AGR" id="ZFIN:ZDB-GENE-040801-207"/>
<dbReference type="CTD" id="79036"/>
<dbReference type="ZFIN" id="ZDB-GENE-040801-207">
    <property type="gene designation" value="kxd1"/>
</dbReference>
<dbReference type="eggNOG" id="KOG3443">
    <property type="taxonomic scope" value="Eukaryota"/>
</dbReference>
<dbReference type="HOGENOM" id="CLU_094353_3_0_1"/>
<dbReference type="InParanoid" id="Q6DBR9"/>
<dbReference type="OMA" id="TSPGDWC"/>
<dbReference type="OrthoDB" id="10258877at2759"/>
<dbReference type="PhylomeDB" id="Q6DBR9"/>
<dbReference type="TreeFam" id="TF319035"/>
<dbReference type="PRO" id="PR:Q6DBR9"/>
<dbReference type="Proteomes" id="UP000000437">
    <property type="component" value="Chromosome 25"/>
</dbReference>
<dbReference type="Bgee" id="ENSDARG00000051934">
    <property type="expression patterns" value="Expressed in mature ovarian follicle and 26 other cell types or tissues"/>
</dbReference>
<dbReference type="GO" id="GO:0099078">
    <property type="term" value="C:BORC complex"/>
    <property type="evidence" value="ECO:0000250"/>
    <property type="project" value="UniProtKB"/>
</dbReference>
<dbReference type="GO" id="GO:0005765">
    <property type="term" value="C:lysosomal membrane"/>
    <property type="evidence" value="ECO:0007669"/>
    <property type="project" value="UniProtKB-SubCell"/>
</dbReference>
<dbReference type="GO" id="GO:0032418">
    <property type="term" value="P:lysosome localization"/>
    <property type="evidence" value="ECO:0000250"/>
    <property type="project" value="UniProtKB"/>
</dbReference>
<dbReference type="GO" id="GO:0016192">
    <property type="term" value="P:vesicle-mediated transport"/>
    <property type="evidence" value="ECO:0000250"/>
    <property type="project" value="UniProtKB"/>
</dbReference>
<dbReference type="InterPro" id="IPR039843">
    <property type="entry name" value="KXD1-like"/>
</dbReference>
<dbReference type="InterPro" id="IPR019371">
    <property type="entry name" value="KxDL_dom"/>
</dbReference>
<dbReference type="PANTHER" id="PTHR13511">
    <property type="entry name" value="KXDL MOTIF-CONTAINING PROTEIN 1"/>
    <property type="match status" value="1"/>
</dbReference>
<dbReference type="PANTHER" id="PTHR13511:SF0">
    <property type="entry name" value="KXDL MOTIF-CONTAINING PROTEIN 1"/>
    <property type="match status" value="1"/>
</dbReference>
<dbReference type="Pfam" id="PF10241">
    <property type="entry name" value="KxDL"/>
    <property type="match status" value="1"/>
</dbReference>
<comment type="function">
    <text evidence="1 2">As part of a BORC-like complex may play a role in lysosomes movement and localization at the cell periphery. Associated with the cytosolic face of lysosomes, this complex may couple lysosomes to microtubule plus-end-directed kinesin motor. May also be involved in the biogenesis of lysosome-related organelles such as melanosomes.</text>
</comment>
<comment type="subunit">
    <text evidence="1">Associates with the BLOC-1 complex.</text>
</comment>
<comment type="subcellular location">
    <subcellularLocation>
        <location evidence="2">Lysosome membrane</location>
    </subcellularLocation>
</comment>
<comment type="similarity">
    <text evidence="4">Belongs to the KXD1 family.</text>
</comment>
<evidence type="ECO:0000250" key="1">
    <source>
        <dbReference type="UniProtKB" id="Q80XH1"/>
    </source>
</evidence>
<evidence type="ECO:0000250" key="2">
    <source>
        <dbReference type="UniProtKB" id="Q9BQD3"/>
    </source>
</evidence>
<evidence type="ECO:0000256" key="3">
    <source>
        <dbReference type="SAM" id="MobiDB-lite"/>
    </source>
</evidence>
<evidence type="ECO:0000305" key="4"/>
<name>KXDL1_DANRE</name>
<protein>
    <recommendedName>
        <fullName>KxDL motif-containing protein 1</fullName>
    </recommendedName>
</protein>
<sequence>MEPTASGIFCNRMLSMVNSEDVNAIIQAQRHMLDRFEKTNEMLINFNGLSNVRLQQMNEHFLMHTRTLIEMKKDLDSIFRRIRALKGKVAKQYPEAFSNVSESSNLEDDDDEFDPIPASVATITTTATSEQSTESCDTSPDVISPTISCCSEDPSQEHTDTPTSDSHEQPVLRDEGPDSADI</sequence>
<reference key="1">
    <citation type="submission" date="2004-07" db="EMBL/GenBank/DDBJ databases">
        <authorList>
            <consortium name="NIH - Zebrafish Gene Collection (ZGC) project"/>
        </authorList>
    </citation>
    <scope>NUCLEOTIDE SEQUENCE [LARGE SCALE MRNA]</scope>
</reference>
<proteinExistence type="evidence at transcript level"/>